<reference key="1">
    <citation type="journal article" date="2002" name="Microbiology">
        <title>Physical and genetic map of the Lactobacillus sakei 23K chromosome.</title>
        <authorList>
            <person name="Dudez A.-M."/>
            <person name="Chaillou S."/>
            <person name="Hissler L."/>
            <person name="Stentz R."/>
            <person name="Champomier-Verges M.-C."/>
            <person name="Alpert C.-A."/>
            <person name="Zagorec M."/>
        </authorList>
    </citation>
    <scope>NUCLEOTIDE SEQUENCE [GENOMIC DNA]</scope>
</reference>
<reference key="2">
    <citation type="journal article" date="2005" name="Nat. Biotechnol.">
        <title>The complete genome sequence of the meat-borne lactic acid bacterium Lactobacillus sakei 23K.</title>
        <authorList>
            <person name="Chaillou S."/>
            <person name="Champomier-Verges M.-C."/>
            <person name="Cornet M."/>
            <person name="Crutz-Le Coq A.-M."/>
            <person name="Dudez A.-M."/>
            <person name="Martin V."/>
            <person name="Beaufils S."/>
            <person name="Darbon-Rongere E."/>
            <person name="Bossy R."/>
            <person name="Loux V."/>
            <person name="Zagorec M."/>
        </authorList>
    </citation>
    <scope>NUCLEOTIDE SEQUENCE [LARGE SCALE GENOMIC DNA]</scope>
    <source>
        <strain>23K</strain>
    </source>
</reference>
<sequence>MRTPKHDLPEAVAKRIPIYYRYFKLLETDGIERIKSEQLAKLVAIPSATIRRDFSYIGDLGRSGYGYEVSHLIQIFSAVLKADILTKMAVIGVGNLGRALIENNFRRNDNLQITCAFDTNPALVGQTLNGVPIYAIDQLATVIPAAGITTAISTVPSEASQRSAEQLIDAGITSILNFAPTRLQVPRHINVRYLDLTAELQTLLLFEE</sequence>
<dbReference type="EMBL" id="AF401045">
    <property type="protein sequence ID" value="AAK92526.1"/>
    <property type="molecule type" value="Genomic_DNA"/>
</dbReference>
<dbReference type="EMBL" id="CR936503">
    <property type="protein sequence ID" value="CAI55149.1"/>
    <property type="molecule type" value="Genomic_DNA"/>
</dbReference>
<dbReference type="RefSeq" id="WP_011374551.1">
    <property type="nucleotide sequence ID" value="NC_007576.1"/>
</dbReference>
<dbReference type="SMR" id="Q93ML3"/>
<dbReference type="STRING" id="314315.LCA_0848"/>
<dbReference type="KEGG" id="lsa:LCA_0848"/>
<dbReference type="eggNOG" id="COG2344">
    <property type="taxonomic scope" value="Bacteria"/>
</dbReference>
<dbReference type="HOGENOM" id="CLU_061534_1_1_9"/>
<dbReference type="OrthoDB" id="9784760at2"/>
<dbReference type="Proteomes" id="UP000002707">
    <property type="component" value="Chromosome"/>
</dbReference>
<dbReference type="GO" id="GO:0005737">
    <property type="term" value="C:cytoplasm"/>
    <property type="evidence" value="ECO:0007669"/>
    <property type="project" value="UniProtKB-SubCell"/>
</dbReference>
<dbReference type="GO" id="GO:0003677">
    <property type="term" value="F:DNA binding"/>
    <property type="evidence" value="ECO:0007669"/>
    <property type="project" value="UniProtKB-UniRule"/>
</dbReference>
<dbReference type="GO" id="GO:0003700">
    <property type="term" value="F:DNA-binding transcription factor activity"/>
    <property type="evidence" value="ECO:0007669"/>
    <property type="project" value="UniProtKB-UniRule"/>
</dbReference>
<dbReference type="GO" id="GO:0045892">
    <property type="term" value="P:negative regulation of DNA-templated transcription"/>
    <property type="evidence" value="ECO:0007669"/>
    <property type="project" value="InterPro"/>
</dbReference>
<dbReference type="GO" id="GO:0051775">
    <property type="term" value="P:response to redox state"/>
    <property type="evidence" value="ECO:0007669"/>
    <property type="project" value="InterPro"/>
</dbReference>
<dbReference type="Gene3D" id="3.40.50.720">
    <property type="entry name" value="NAD(P)-binding Rossmann-like Domain"/>
    <property type="match status" value="1"/>
</dbReference>
<dbReference type="Gene3D" id="1.10.10.10">
    <property type="entry name" value="Winged helix-like DNA-binding domain superfamily/Winged helix DNA-binding domain"/>
    <property type="match status" value="1"/>
</dbReference>
<dbReference type="HAMAP" id="MF_01131">
    <property type="entry name" value="Rex"/>
    <property type="match status" value="1"/>
</dbReference>
<dbReference type="InterPro" id="IPR003781">
    <property type="entry name" value="CoA-bd"/>
</dbReference>
<dbReference type="InterPro" id="IPR036291">
    <property type="entry name" value="NAD(P)-bd_dom_sf"/>
</dbReference>
<dbReference type="InterPro" id="IPR009718">
    <property type="entry name" value="Rex_DNA-bd_C_dom"/>
</dbReference>
<dbReference type="InterPro" id="IPR022876">
    <property type="entry name" value="Tscrpt_rep_Rex"/>
</dbReference>
<dbReference type="InterPro" id="IPR036388">
    <property type="entry name" value="WH-like_DNA-bd_sf"/>
</dbReference>
<dbReference type="InterPro" id="IPR036390">
    <property type="entry name" value="WH_DNA-bd_sf"/>
</dbReference>
<dbReference type="NCBIfam" id="NF003989">
    <property type="entry name" value="PRK05472.1-3"/>
    <property type="match status" value="1"/>
</dbReference>
<dbReference type="NCBIfam" id="NF003991">
    <property type="entry name" value="PRK05472.1-5"/>
    <property type="match status" value="1"/>
</dbReference>
<dbReference type="NCBIfam" id="NF003994">
    <property type="entry name" value="PRK05472.2-3"/>
    <property type="match status" value="1"/>
</dbReference>
<dbReference type="NCBIfam" id="NF003995">
    <property type="entry name" value="PRK05472.2-4"/>
    <property type="match status" value="1"/>
</dbReference>
<dbReference type="NCBIfam" id="NF003996">
    <property type="entry name" value="PRK05472.2-5"/>
    <property type="match status" value="1"/>
</dbReference>
<dbReference type="PANTHER" id="PTHR35786">
    <property type="entry name" value="REDOX-SENSING TRANSCRIPTIONAL REPRESSOR REX"/>
    <property type="match status" value="1"/>
</dbReference>
<dbReference type="PANTHER" id="PTHR35786:SF1">
    <property type="entry name" value="REDOX-SENSING TRANSCRIPTIONAL REPRESSOR REX 1"/>
    <property type="match status" value="1"/>
</dbReference>
<dbReference type="Pfam" id="PF02629">
    <property type="entry name" value="CoA_binding"/>
    <property type="match status" value="1"/>
</dbReference>
<dbReference type="Pfam" id="PF06971">
    <property type="entry name" value="Put_DNA-bind_N"/>
    <property type="match status" value="1"/>
</dbReference>
<dbReference type="SMART" id="SM00881">
    <property type="entry name" value="CoA_binding"/>
    <property type="match status" value="1"/>
</dbReference>
<dbReference type="SUPFAM" id="SSF51735">
    <property type="entry name" value="NAD(P)-binding Rossmann-fold domains"/>
    <property type="match status" value="1"/>
</dbReference>
<dbReference type="SUPFAM" id="SSF46785">
    <property type="entry name" value="Winged helix' DNA-binding domain"/>
    <property type="match status" value="1"/>
</dbReference>
<comment type="function">
    <text evidence="1">Modulates transcription in response to changes in cellular NADH/NAD(+) redox state.</text>
</comment>
<comment type="subunit">
    <text evidence="1">Homodimer.</text>
</comment>
<comment type="subcellular location">
    <subcellularLocation>
        <location evidence="1">Cytoplasm</location>
    </subcellularLocation>
</comment>
<comment type="similarity">
    <text evidence="1">Belongs to the transcriptional regulatory Rex family.</text>
</comment>
<keyword id="KW-0963">Cytoplasm</keyword>
<keyword id="KW-0238">DNA-binding</keyword>
<keyword id="KW-0520">NAD</keyword>
<keyword id="KW-1185">Reference proteome</keyword>
<keyword id="KW-0678">Repressor</keyword>
<keyword id="KW-0804">Transcription</keyword>
<keyword id="KW-0805">Transcription regulation</keyword>
<accession>Q93ML3</accession>
<accession>Q38XD2</accession>
<name>REX_LATSS</name>
<protein>
    <recommendedName>
        <fullName evidence="1">Redox-sensing transcriptional repressor Rex</fullName>
    </recommendedName>
</protein>
<evidence type="ECO:0000255" key="1">
    <source>
        <dbReference type="HAMAP-Rule" id="MF_01131"/>
    </source>
</evidence>
<organism>
    <name type="scientific">Latilactobacillus sakei subsp. sakei (strain 23K)</name>
    <name type="common">Lactobacillus sakei subsp. sakei</name>
    <dbReference type="NCBI Taxonomy" id="314315"/>
    <lineage>
        <taxon>Bacteria</taxon>
        <taxon>Bacillati</taxon>
        <taxon>Bacillota</taxon>
        <taxon>Bacilli</taxon>
        <taxon>Lactobacillales</taxon>
        <taxon>Lactobacillaceae</taxon>
        <taxon>Latilactobacillus</taxon>
    </lineage>
</organism>
<proteinExistence type="inferred from homology"/>
<feature type="chain" id="PRO_0000097896" description="Redox-sensing transcriptional repressor Rex">
    <location>
        <begin position="1"/>
        <end position="208"/>
    </location>
</feature>
<feature type="DNA-binding region" description="H-T-H motif" evidence="1">
    <location>
        <begin position="18"/>
        <end position="57"/>
    </location>
</feature>
<feature type="binding site" evidence="1">
    <location>
        <begin position="92"/>
        <end position="97"/>
    </location>
    <ligand>
        <name>NAD(+)</name>
        <dbReference type="ChEBI" id="CHEBI:57540"/>
    </ligand>
</feature>
<gene>
    <name evidence="1" type="primary">rex</name>
    <name type="synonym">laaK</name>
    <name type="ordered locus">LCA_0848</name>
</gene>